<keyword id="KW-0687">Ribonucleoprotein</keyword>
<keyword id="KW-0689">Ribosomal protein</keyword>
<keyword id="KW-0694">RNA-binding</keyword>
<keyword id="KW-0699">rRNA-binding</keyword>
<accession>A7FNM4</accession>
<feature type="chain" id="PRO_1000068013" description="Large ribosomal subunit protein uL14">
    <location>
        <begin position="1"/>
        <end position="123"/>
    </location>
</feature>
<proteinExistence type="inferred from homology"/>
<gene>
    <name evidence="1" type="primary">rplN</name>
    <name type="ordered locus">YpsIP31758_3904</name>
</gene>
<evidence type="ECO:0000255" key="1">
    <source>
        <dbReference type="HAMAP-Rule" id="MF_01367"/>
    </source>
</evidence>
<evidence type="ECO:0000305" key="2"/>
<comment type="function">
    <text evidence="1">Binds to 23S rRNA. Forms part of two intersubunit bridges in the 70S ribosome.</text>
</comment>
<comment type="subunit">
    <text evidence="1">Part of the 50S ribosomal subunit. Forms a cluster with proteins L3 and L19. In the 70S ribosome, L14 and L19 interact and together make contacts with the 16S rRNA in bridges B5 and B8.</text>
</comment>
<comment type="similarity">
    <text evidence="1">Belongs to the universal ribosomal protein uL14 family.</text>
</comment>
<protein>
    <recommendedName>
        <fullName evidence="1">Large ribosomal subunit protein uL14</fullName>
    </recommendedName>
    <alternativeName>
        <fullName evidence="2">50S ribosomal protein L14</fullName>
    </alternativeName>
</protein>
<organism>
    <name type="scientific">Yersinia pseudotuberculosis serotype O:1b (strain IP 31758)</name>
    <dbReference type="NCBI Taxonomy" id="349747"/>
    <lineage>
        <taxon>Bacteria</taxon>
        <taxon>Pseudomonadati</taxon>
        <taxon>Pseudomonadota</taxon>
        <taxon>Gammaproteobacteria</taxon>
        <taxon>Enterobacterales</taxon>
        <taxon>Yersiniaceae</taxon>
        <taxon>Yersinia</taxon>
    </lineage>
</organism>
<dbReference type="EMBL" id="CP000720">
    <property type="protein sequence ID" value="ABS46761.1"/>
    <property type="molecule type" value="Genomic_DNA"/>
</dbReference>
<dbReference type="RefSeq" id="WP_002213325.1">
    <property type="nucleotide sequence ID" value="NC_009708.1"/>
</dbReference>
<dbReference type="SMR" id="A7FNM4"/>
<dbReference type="GeneID" id="97454241"/>
<dbReference type="KEGG" id="ypi:YpsIP31758_3904"/>
<dbReference type="HOGENOM" id="CLU_095071_2_1_6"/>
<dbReference type="Proteomes" id="UP000002412">
    <property type="component" value="Chromosome"/>
</dbReference>
<dbReference type="GO" id="GO:0022625">
    <property type="term" value="C:cytosolic large ribosomal subunit"/>
    <property type="evidence" value="ECO:0007669"/>
    <property type="project" value="TreeGrafter"/>
</dbReference>
<dbReference type="GO" id="GO:0070180">
    <property type="term" value="F:large ribosomal subunit rRNA binding"/>
    <property type="evidence" value="ECO:0007669"/>
    <property type="project" value="TreeGrafter"/>
</dbReference>
<dbReference type="GO" id="GO:0003735">
    <property type="term" value="F:structural constituent of ribosome"/>
    <property type="evidence" value="ECO:0007669"/>
    <property type="project" value="InterPro"/>
</dbReference>
<dbReference type="GO" id="GO:0006412">
    <property type="term" value="P:translation"/>
    <property type="evidence" value="ECO:0007669"/>
    <property type="project" value="UniProtKB-UniRule"/>
</dbReference>
<dbReference type="CDD" id="cd00337">
    <property type="entry name" value="Ribosomal_uL14"/>
    <property type="match status" value="1"/>
</dbReference>
<dbReference type="FunFam" id="2.40.150.20:FF:000001">
    <property type="entry name" value="50S ribosomal protein L14"/>
    <property type="match status" value="1"/>
</dbReference>
<dbReference type="Gene3D" id="2.40.150.20">
    <property type="entry name" value="Ribosomal protein L14"/>
    <property type="match status" value="1"/>
</dbReference>
<dbReference type="HAMAP" id="MF_01367">
    <property type="entry name" value="Ribosomal_uL14"/>
    <property type="match status" value="1"/>
</dbReference>
<dbReference type="InterPro" id="IPR000218">
    <property type="entry name" value="Ribosomal_uL14"/>
</dbReference>
<dbReference type="InterPro" id="IPR005745">
    <property type="entry name" value="Ribosomal_uL14_bac-type"/>
</dbReference>
<dbReference type="InterPro" id="IPR019972">
    <property type="entry name" value="Ribosomal_uL14_CS"/>
</dbReference>
<dbReference type="InterPro" id="IPR036853">
    <property type="entry name" value="Ribosomal_uL14_sf"/>
</dbReference>
<dbReference type="NCBIfam" id="TIGR01067">
    <property type="entry name" value="rplN_bact"/>
    <property type="match status" value="1"/>
</dbReference>
<dbReference type="PANTHER" id="PTHR11761">
    <property type="entry name" value="50S/60S RIBOSOMAL PROTEIN L14/L23"/>
    <property type="match status" value="1"/>
</dbReference>
<dbReference type="PANTHER" id="PTHR11761:SF3">
    <property type="entry name" value="LARGE RIBOSOMAL SUBUNIT PROTEIN UL14M"/>
    <property type="match status" value="1"/>
</dbReference>
<dbReference type="Pfam" id="PF00238">
    <property type="entry name" value="Ribosomal_L14"/>
    <property type="match status" value="1"/>
</dbReference>
<dbReference type="SMART" id="SM01374">
    <property type="entry name" value="Ribosomal_L14"/>
    <property type="match status" value="1"/>
</dbReference>
<dbReference type="SUPFAM" id="SSF50193">
    <property type="entry name" value="Ribosomal protein L14"/>
    <property type="match status" value="1"/>
</dbReference>
<dbReference type="PROSITE" id="PS00049">
    <property type="entry name" value="RIBOSOMAL_L14"/>
    <property type="match status" value="1"/>
</dbReference>
<sequence>MIQEQTMLNVADNSGARRVMCIKVLGGSHRRYAGIGDIIKITIKEAIPRGKVKKGDVLKAVVVRTKKGVRRPDGSVIRFDGNACVILNNNSEQPIGTRIFGPVTRELRNEKFMKIISLAPEVL</sequence>
<name>RL14_YERP3</name>
<reference key="1">
    <citation type="journal article" date="2007" name="PLoS Genet.">
        <title>The complete genome sequence of Yersinia pseudotuberculosis IP31758, the causative agent of Far East scarlet-like fever.</title>
        <authorList>
            <person name="Eppinger M."/>
            <person name="Rosovitz M.J."/>
            <person name="Fricke W.F."/>
            <person name="Rasko D.A."/>
            <person name="Kokorina G."/>
            <person name="Fayolle C."/>
            <person name="Lindler L.E."/>
            <person name="Carniel E."/>
            <person name="Ravel J."/>
        </authorList>
    </citation>
    <scope>NUCLEOTIDE SEQUENCE [LARGE SCALE GENOMIC DNA]</scope>
    <source>
        <strain>IP 31758</strain>
    </source>
</reference>